<protein>
    <recommendedName>
        <fullName>Ribosomal RNA small subunit methyltransferase E</fullName>
        <ecNumber>2.1.1.193</ecNumber>
    </recommendedName>
    <alternativeName>
        <fullName>16S rRNA m3U1498 methyltransferase</fullName>
    </alternativeName>
</protein>
<name>RSME_MESH2</name>
<keyword id="KW-0963">Cytoplasm</keyword>
<keyword id="KW-0489">Methyltransferase</keyword>
<keyword id="KW-0698">rRNA processing</keyword>
<keyword id="KW-0949">S-adenosyl-L-methionine</keyword>
<keyword id="KW-0808">Transferase</keyword>
<accession>O50188</accession>
<accession>Q601M1</accession>
<evidence type="ECO:0000250" key="1"/>
<evidence type="ECO:0000305" key="2"/>
<comment type="function">
    <text evidence="1">Specifically methylates the N3 position of the uracil ring of uridine 1498 (m3U1498) in 16S rRNA. Acts on the fully assembled 30S ribosomal subunit (By similarity).</text>
</comment>
<comment type="catalytic activity">
    <reaction>
        <text>uridine(1498) in 16S rRNA + S-adenosyl-L-methionine = N(3)-methyluridine(1498) in 16S rRNA + S-adenosyl-L-homocysteine + H(+)</text>
        <dbReference type="Rhea" id="RHEA:42920"/>
        <dbReference type="Rhea" id="RHEA-COMP:10283"/>
        <dbReference type="Rhea" id="RHEA-COMP:10284"/>
        <dbReference type="ChEBI" id="CHEBI:15378"/>
        <dbReference type="ChEBI" id="CHEBI:57856"/>
        <dbReference type="ChEBI" id="CHEBI:59789"/>
        <dbReference type="ChEBI" id="CHEBI:65315"/>
        <dbReference type="ChEBI" id="CHEBI:74502"/>
        <dbReference type="EC" id="2.1.1.193"/>
    </reaction>
</comment>
<comment type="subcellular location">
    <subcellularLocation>
        <location evidence="1">Cytoplasm</location>
    </subcellularLocation>
</comment>
<comment type="similarity">
    <text evidence="2">Belongs to the RNA methyltransferase RsmE family.</text>
</comment>
<organism>
    <name type="scientific">Mesomycoplasma hyopneumoniae (strain 232)</name>
    <name type="common">Mycoplasma hyopneumoniae</name>
    <dbReference type="NCBI Taxonomy" id="295358"/>
    <lineage>
        <taxon>Bacteria</taxon>
        <taxon>Bacillati</taxon>
        <taxon>Mycoplasmatota</taxon>
        <taxon>Mycoplasmoidales</taxon>
        <taxon>Metamycoplasmataceae</taxon>
        <taxon>Mesomycoplasma</taxon>
    </lineage>
</organism>
<dbReference type="EC" id="2.1.1.193"/>
<dbReference type="EMBL" id="AF012905">
    <property type="protein sequence ID" value="AAC32528.1"/>
    <property type="molecule type" value="Genomic_DNA"/>
</dbReference>
<dbReference type="EMBL" id="AE017332">
    <property type="protein sequence ID" value="AAV27441.1"/>
    <property type="molecule type" value="Genomic_DNA"/>
</dbReference>
<dbReference type="PIR" id="T03807">
    <property type="entry name" value="T03807"/>
</dbReference>
<dbReference type="RefSeq" id="WP_011206018.1">
    <property type="nucleotide sequence ID" value="NC_006360.1"/>
</dbReference>
<dbReference type="SMR" id="O50188"/>
<dbReference type="KEGG" id="mhy:mhp181"/>
<dbReference type="eggNOG" id="COG1385">
    <property type="taxonomic scope" value="Bacteria"/>
</dbReference>
<dbReference type="HOGENOM" id="CLU_067442_5_1_14"/>
<dbReference type="PhylomeDB" id="O50188"/>
<dbReference type="Proteomes" id="UP000006822">
    <property type="component" value="Chromosome"/>
</dbReference>
<dbReference type="GO" id="GO:0005737">
    <property type="term" value="C:cytoplasm"/>
    <property type="evidence" value="ECO:0007669"/>
    <property type="project" value="UniProtKB-SubCell"/>
</dbReference>
<dbReference type="GO" id="GO:0070042">
    <property type="term" value="F:rRNA (uridine-N3-)-methyltransferase activity"/>
    <property type="evidence" value="ECO:0007669"/>
    <property type="project" value="TreeGrafter"/>
</dbReference>
<dbReference type="GO" id="GO:0070475">
    <property type="term" value="P:rRNA base methylation"/>
    <property type="evidence" value="ECO:0007669"/>
    <property type="project" value="TreeGrafter"/>
</dbReference>
<dbReference type="CDD" id="cd18084">
    <property type="entry name" value="RsmE-like"/>
    <property type="match status" value="1"/>
</dbReference>
<dbReference type="Gene3D" id="3.40.1280.10">
    <property type="match status" value="1"/>
</dbReference>
<dbReference type="Gene3D" id="2.40.240.20">
    <property type="entry name" value="Hypothetical PUA domain-like, domain 1"/>
    <property type="match status" value="1"/>
</dbReference>
<dbReference type="InterPro" id="IPR029028">
    <property type="entry name" value="Alpha/beta_knot_MTases"/>
</dbReference>
<dbReference type="InterPro" id="IPR006700">
    <property type="entry name" value="RsmE"/>
</dbReference>
<dbReference type="InterPro" id="IPR046886">
    <property type="entry name" value="RsmE_MTase_dom"/>
</dbReference>
<dbReference type="InterPro" id="IPR029026">
    <property type="entry name" value="tRNA_m1G_MTases_N"/>
</dbReference>
<dbReference type="NCBIfam" id="NF008701">
    <property type="entry name" value="PRK11713.5-5"/>
    <property type="match status" value="1"/>
</dbReference>
<dbReference type="NCBIfam" id="TIGR00046">
    <property type="entry name" value="RsmE family RNA methyltransferase"/>
    <property type="match status" value="1"/>
</dbReference>
<dbReference type="PANTHER" id="PTHR30027:SF3">
    <property type="entry name" value="16S RRNA (URACIL(1498)-N(3))-METHYLTRANSFERASE"/>
    <property type="match status" value="1"/>
</dbReference>
<dbReference type="PANTHER" id="PTHR30027">
    <property type="entry name" value="RIBOSOMAL RNA SMALL SUBUNIT METHYLTRANSFERASE E"/>
    <property type="match status" value="1"/>
</dbReference>
<dbReference type="Pfam" id="PF04452">
    <property type="entry name" value="Methyltrans_RNA"/>
    <property type="match status" value="1"/>
</dbReference>
<dbReference type="PIRSF" id="PIRSF015601">
    <property type="entry name" value="MTase_slr0722"/>
    <property type="match status" value="1"/>
</dbReference>
<dbReference type="SUPFAM" id="SSF75217">
    <property type="entry name" value="alpha/beta knot"/>
    <property type="match status" value="1"/>
</dbReference>
<proteinExistence type="inferred from homology"/>
<feature type="chain" id="PRO_0000176212" description="Ribosomal RNA small subunit methyltransferase E">
    <location>
        <begin position="1"/>
        <end position="227"/>
    </location>
</feature>
<sequence>MYRFFVNEKQENFFILTNLTLNHIKTVRIKNENFICVYQNEFYLVRLVPNSNKAEIIEKIKGNNEPKNKVVLALAILKTKSFEFAIQKAVEIGVNEIWPFYSKNVSQKLSGDLEKKLKRWEQICLHSAQQSFRNLIPKINLPINYKDLLEQAKNFPVKLISFERAKNNINIPDNPQNTIIIIGPEGGFDDVEIQQAEKLGFQSITLGKRILRSETAAIFLLTKCIKD</sequence>
<reference key="1">
    <citation type="journal article" date="1998" name="Gene">
        <title>Molecular analysis of the P97 cilium adhesin operon of Mycoplasma hyopneumoniae.</title>
        <authorList>
            <person name="Hsu T."/>
            <person name="Minion F.C."/>
        </authorList>
    </citation>
    <scope>NUCLEOTIDE SEQUENCE [GENOMIC DNA]</scope>
</reference>
<reference key="2">
    <citation type="journal article" date="2004" name="J. Bacteriol.">
        <title>The genome sequence of Mycoplasma hyopneumoniae strain 232, the agent of swine mycoplasmosis.</title>
        <authorList>
            <person name="Minion F.C."/>
            <person name="Lefkowitz E.J."/>
            <person name="Madsen M.L."/>
            <person name="Cleary B.J."/>
            <person name="Swartzell S.M."/>
            <person name="Mahairas G.G."/>
        </authorList>
    </citation>
    <scope>NUCLEOTIDE SEQUENCE [LARGE SCALE GENOMIC DNA]</scope>
    <source>
        <strain>232</strain>
    </source>
</reference>
<gene>
    <name type="primary">rsmE</name>
    <name type="ordered locus">mhp181</name>
</gene>